<dbReference type="EMBL" id="X06642">
    <property type="protein sequence ID" value="CAA29851.1"/>
    <property type="molecule type" value="Genomic_DNA"/>
</dbReference>
<dbReference type="PIR" id="S01622">
    <property type="entry name" value="S01622"/>
</dbReference>
<dbReference type="RefSeq" id="NP_999718.1">
    <property type="nucleotide sequence ID" value="NM_214553.2"/>
</dbReference>
<dbReference type="SMR" id="P16886"/>
<dbReference type="STRING" id="7668.P16886"/>
<dbReference type="iPTMnet" id="P16886"/>
<dbReference type="EnsemblMetazoa" id="NM_214553">
    <property type="protein sequence ID" value="NP_999718"/>
    <property type="gene ID" value="LOC373348"/>
</dbReference>
<dbReference type="GeneID" id="373348"/>
<dbReference type="KEGG" id="spu:373348"/>
<dbReference type="eggNOG" id="KOG1756">
    <property type="taxonomic scope" value="Eukaryota"/>
</dbReference>
<dbReference type="HOGENOM" id="CLU_062828_3_3_1"/>
<dbReference type="InParanoid" id="P16886"/>
<dbReference type="OMA" id="THHEYAK"/>
<dbReference type="OrthoDB" id="10047256at2759"/>
<dbReference type="PhylomeDB" id="P16886"/>
<dbReference type="Proteomes" id="UP000007110">
    <property type="component" value="Unassembled WGS sequence"/>
</dbReference>
<dbReference type="GO" id="GO:0000786">
    <property type="term" value="C:nucleosome"/>
    <property type="evidence" value="ECO:0000318"/>
    <property type="project" value="GO_Central"/>
</dbReference>
<dbReference type="GO" id="GO:0005634">
    <property type="term" value="C:nucleus"/>
    <property type="evidence" value="ECO:0000318"/>
    <property type="project" value="GO_Central"/>
</dbReference>
<dbReference type="GO" id="GO:0003677">
    <property type="term" value="F:DNA binding"/>
    <property type="evidence" value="ECO:0007669"/>
    <property type="project" value="UniProtKB-KW"/>
</dbReference>
<dbReference type="GO" id="GO:0046982">
    <property type="term" value="F:protein heterodimerization activity"/>
    <property type="evidence" value="ECO:0007669"/>
    <property type="project" value="InterPro"/>
</dbReference>
<dbReference type="GO" id="GO:0030527">
    <property type="term" value="F:structural constituent of chromatin"/>
    <property type="evidence" value="ECO:0000318"/>
    <property type="project" value="GO_Central"/>
</dbReference>
<dbReference type="GO" id="GO:0031507">
    <property type="term" value="P:heterochromatin formation"/>
    <property type="evidence" value="ECO:0000318"/>
    <property type="project" value="GO_Central"/>
</dbReference>
<dbReference type="CDD" id="cd00074">
    <property type="entry name" value="HFD_H2A"/>
    <property type="match status" value="1"/>
</dbReference>
<dbReference type="FunFam" id="1.10.20.10:FF:000004">
    <property type="entry name" value="Histone H2A"/>
    <property type="match status" value="1"/>
</dbReference>
<dbReference type="Gene3D" id="1.10.20.10">
    <property type="entry name" value="Histone, subunit A"/>
    <property type="match status" value="1"/>
</dbReference>
<dbReference type="InterPro" id="IPR009072">
    <property type="entry name" value="Histone-fold"/>
</dbReference>
<dbReference type="InterPro" id="IPR002119">
    <property type="entry name" value="Histone_H2A"/>
</dbReference>
<dbReference type="InterPro" id="IPR007125">
    <property type="entry name" value="Histone_H2A/H2B/H3"/>
</dbReference>
<dbReference type="InterPro" id="IPR032454">
    <property type="entry name" value="Histone_H2A_C"/>
</dbReference>
<dbReference type="InterPro" id="IPR032458">
    <property type="entry name" value="Histone_H2A_CS"/>
</dbReference>
<dbReference type="PANTHER" id="PTHR23430">
    <property type="entry name" value="HISTONE H2A"/>
    <property type="match status" value="1"/>
</dbReference>
<dbReference type="Pfam" id="PF00125">
    <property type="entry name" value="Histone"/>
    <property type="match status" value="1"/>
</dbReference>
<dbReference type="Pfam" id="PF16211">
    <property type="entry name" value="Histone_H2A_C"/>
    <property type="match status" value="1"/>
</dbReference>
<dbReference type="PRINTS" id="PR00620">
    <property type="entry name" value="HISTONEH2A"/>
</dbReference>
<dbReference type="SMART" id="SM00414">
    <property type="entry name" value="H2A"/>
    <property type="match status" value="1"/>
</dbReference>
<dbReference type="SUPFAM" id="SSF47113">
    <property type="entry name" value="Histone-fold"/>
    <property type="match status" value="1"/>
</dbReference>
<dbReference type="PROSITE" id="PS00046">
    <property type="entry name" value="HISTONE_H2A"/>
    <property type="match status" value="1"/>
</dbReference>
<protein>
    <recommendedName>
        <fullName>Late histone H2A.L3</fullName>
    </recommendedName>
</protein>
<keyword id="KW-0007">Acetylation</keyword>
<keyword id="KW-0158">Chromosome</keyword>
<keyword id="KW-0238">DNA-binding</keyword>
<keyword id="KW-1017">Isopeptide bond</keyword>
<keyword id="KW-0488">Methylation</keyword>
<keyword id="KW-0544">Nucleosome core</keyword>
<keyword id="KW-0539">Nucleus</keyword>
<keyword id="KW-0597">Phosphoprotein</keyword>
<keyword id="KW-1185">Reference proteome</keyword>
<keyword id="KW-0832">Ubl conjugation</keyword>
<name>H2AL_STRPU</name>
<evidence type="ECO:0000250" key="1"/>
<evidence type="ECO:0000256" key="2">
    <source>
        <dbReference type="SAM" id="MobiDB-lite"/>
    </source>
</evidence>
<evidence type="ECO:0000305" key="3"/>
<evidence type="ECO:0000305" key="4">
    <source>
    </source>
</evidence>
<feature type="initiator methionine" description="Removed" evidence="1">
    <location>
        <position position="1"/>
    </location>
</feature>
<feature type="chain" id="PRO_0000055282" description="Late histone H2A.L3">
    <location>
        <begin position="2"/>
        <end position="126"/>
    </location>
</feature>
<feature type="region of interest" description="Disordered" evidence="2">
    <location>
        <begin position="1"/>
        <end position="20"/>
    </location>
</feature>
<feature type="compositionally biased region" description="Basic residues" evidence="2">
    <location>
        <begin position="7"/>
        <end position="19"/>
    </location>
</feature>
<feature type="modified residue" description="N-acetylserine" evidence="1">
    <location>
        <position position="2"/>
    </location>
</feature>
<feature type="modified residue" description="Phosphoserine" evidence="1">
    <location>
        <position position="2"/>
    </location>
</feature>
<feature type="modified residue" description="N5-methylglutamine" evidence="1">
    <location>
        <position position="105"/>
    </location>
</feature>
<feature type="cross-link" description="Glycyl lysine isopeptide (Lys-Gly) (interchain with G-Cter in ubiquitin)" evidence="4">
    <location>
        <position position="120"/>
    </location>
</feature>
<proteinExistence type="evidence at protein level"/>
<organism>
    <name type="scientific">Strongylocentrotus purpuratus</name>
    <name type="common">Purple sea urchin</name>
    <dbReference type="NCBI Taxonomy" id="7668"/>
    <lineage>
        <taxon>Eukaryota</taxon>
        <taxon>Metazoa</taxon>
        <taxon>Echinodermata</taxon>
        <taxon>Eleutherozoa</taxon>
        <taxon>Echinozoa</taxon>
        <taxon>Echinoidea</taxon>
        <taxon>Euechinoidea</taxon>
        <taxon>Echinacea</taxon>
        <taxon>Camarodonta</taxon>
        <taxon>Echinidea</taxon>
        <taxon>Strongylocentrotidae</taxon>
        <taxon>Strongylocentrotus</taxon>
    </lineage>
</organism>
<sequence>MSGRGKGAGKARAKAKSRSARAGLQFPVGRVHRFLRKGNYAQRVGAGAPVYLAAVLEYLAAEILELAGNAARDNKKTRIIPRHLQLAVRNDEELNKLLSGVTIAQGGVLPNIQAVLLPKKTSKASK</sequence>
<comment type="function">
    <text>Core component of nucleosome. Nucleosomes wrap and compact DNA into chromatin, limiting DNA accessibility to the cellular machineries which require DNA as a template. Histones thereby play a central role in transcription regulation, DNA repair, DNA replication and chromosomal stability. DNA accessibility is regulated via a complex set of post-translational modifications of histones, also called histone code, and nucleosome remodeling.</text>
</comment>
<comment type="subunit">
    <text>The nucleosome is a histone octamer containing two molecules each of H2A, H2B, H3 and H4 assembled in one H3-H4 heterotetramer and two H2A-H2B heterodimers. The octamer wraps approximately 147 bp of DNA.</text>
</comment>
<comment type="subcellular location">
    <subcellularLocation>
        <location>Nucleus</location>
    </subcellularLocation>
    <subcellularLocation>
        <location>Chromosome</location>
    </subcellularLocation>
</comment>
<comment type="PTM">
    <text evidence="3">Monoubiquitination of Lys-120 gives a specific tag for epigenetic transcriptional repression.</text>
</comment>
<comment type="PTM">
    <text evidence="1">Phosphorylation of Ser-2 directly represses transcription.</text>
</comment>
<comment type="similarity">
    <text evidence="3">Belongs to the histone H2A family.</text>
</comment>
<reference key="1">
    <citation type="journal article" date="1987" name="Nucleic Acids Res.">
        <title>Evolution of late H2A, H2B, and H4 histone genes of the sea urchin, Strongylocentrotus purpuratus.</title>
        <authorList>
            <person name="Maxson R."/>
            <person name="Mohun T."/>
            <person name="Gormezano G."/>
            <person name="Kedes L."/>
        </authorList>
    </citation>
    <scope>NUCLEOTIDE SEQUENCE [GENOMIC DNA]</scope>
</reference>
<reference key="2">
    <citation type="journal article" date="1995" name="Dev. Genet.">
        <title>Embryonic regulation of histone ubiquitination in the sea urchin.</title>
        <authorList>
            <person name="Jasinskiene N."/>
            <person name="Jasinskas A."/>
            <person name="Langmore J.P."/>
        </authorList>
    </citation>
    <scope>UBIQUITINATION</scope>
</reference>
<accession>P16886</accession>